<comment type="interaction">
    <interactant intactId="EBI-1238687">
        <id>O04567</id>
    </interactant>
    <interactant intactId="EBI-16902452">
        <id>Q8VYT3</id>
        <label>At4g30520</label>
    </interactant>
    <organismsDiffer>false</organismsDiffer>
    <experiments>2</experiments>
</comment>
<comment type="interaction">
    <interactant intactId="EBI-1238687">
        <id>O04567</id>
    </interactant>
    <interactant intactId="EBI-6298290">
        <id>Q9ASS4</id>
        <label>At5g48380</label>
    </interactant>
    <organismsDiffer>false</organismsDiffer>
    <experiments>2</experiments>
</comment>
<comment type="interaction">
    <interactant intactId="EBI-1238687">
        <id>O04567</id>
    </interactant>
    <interactant intactId="EBI-20653342">
        <id>A0A178UFM8</id>
        <label>At5g51560</label>
    </interactant>
    <organismsDiffer>false</organismsDiffer>
    <experiments>2</experiments>
</comment>
<comment type="interaction">
    <interactant intactId="EBI-1238687">
        <id>O04567</id>
    </interactant>
    <interactant intactId="EBI-617138">
        <id>Q94F62</id>
        <label>BAK1</label>
    </interactant>
    <organismsDiffer>false</organismsDiffer>
    <experiments>2</experiments>
</comment>
<comment type="interaction">
    <interactant intactId="EBI-1238687">
        <id>O04567</id>
    </interactant>
    <interactant intactId="EBI-16895926">
        <id>Q6XAT2</id>
        <label>ERL2</label>
    </interactant>
    <organismsDiffer>false</organismsDiffer>
    <experiments>2</experiments>
</comment>
<comment type="interaction">
    <interactant intactId="EBI-1238687">
        <id>O04567</id>
    </interactant>
    <interactant intactId="EBI-16146189">
        <id>Q9LFS4</id>
        <label>NIK1</label>
    </interactant>
    <organismsDiffer>false</organismsDiffer>
    <experiments>2</experiments>
</comment>
<comment type="interaction">
    <interactant intactId="EBI-1238687">
        <id>O04567</id>
    </interactant>
    <interactant intactId="EBI-1238953">
        <id>Q9ZRF9</id>
        <label>RPK1</label>
    </interactant>
    <organismsDiffer>false</organismsDiffer>
    <experiments>2</experiments>
</comment>
<comment type="interaction">
    <interactant intactId="EBI-1238687">
        <id>O04567</id>
    </interactant>
    <interactant intactId="EBI-20651925">
        <id>Q6R2K3</id>
        <label>SRF3</label>
    </interactant>
    <organismsDiffer>false</organismsDiffer>
    <experiments>2</experiments>
</comment>
<comment type="interaction">
    <interactant intactId="EBI-1238687">
        <id>O04567</id>
    </interactant>
    <interactant intactId="EBI-16954301">
        <id>Q9C8M9</id>
        <label>SRF6</label>
    </interactant>
    <organismsDiffer>false</organismsDiffer>
    <experiments>2</experiments>
</comment>
<comment type="interaction">
    <interactant intactId="EBI-1238687">
        <id>O04567</id>
    </interactant>
    <interactant intactId="EBI-17072125">
        <id>Q8RWZ1</id>
        <label>SUB</label>
    </interactant>
    <organismsDiffer>false</organismsDiffer>
    <experiments>2</experiments>
</comment>
<comment type="subcellular location">
    <subcellularLocation>
        <location evidence="6">Membrane</location>
        <topology evidence="6">Single-pass membrane protein</topology>
    </subcellularLocation>
</comment>
<comment type="alternative products">
    <event type="alternative splicing"/>
    <isoform>
        <id>O04567-1</id>
        <name>1</name>
        <sequence type="displayed"/>
    </isoform>
    <isoform>
        <id>O04567-2</id>
        <name>2</name>
        <sequence type="described" ref="VSP_028261"/>
    </isoform>
</comment>
<comment type="domain">
    <text>The protein kinase domain is predicted to be catalytically inactive.</text>
</comment>
<comment type="similarity">
    <text evidence="4">Belongs to the protein kinase superfamily. Ser/Thr protein kinase family.</text>
</comment>
<organism>
    <name type="scientific">Arabidopsis thaliana</name>
    <name type="common">Mouse-ear cress</name>
    <dbReference type="NCBI Taxonomy" id="3702"/>
    <lineage>
        <taxon>Eukaryota</taxon>
        <taxon>Viridiplantae</taxon>
        <taxon>Streptophyta</taxon>
        <taxon>Embryophyta</taxon>
        <taxon>Tracheophyta</taxon>
        <taxon>Spermatophyta</taxon>
        <taxon>Magnoliopsida</taxon>
        <taxon>eudicotyledons</taxon>
        <taxon>Gunneridae</taxon>
        <taxon>Pentapetalae</taxon>
        <taxon>rosids</taxon>
        <taxon>malvids</taxon>
        <taxon>Brassicales</taxon>
        <taxon>Brassicaceae</taxon>
        <taxon>Camelineae</taxon>
        <taxon>Arabidopsis</taxon>
    </lineage>
</organism>
<reference key="1">
    <citation type="journal article" date="2000" name="Nature">
        <title>Sequence and analysis of chromosome 1 of the plant Arabidopsis thaliana.</title>
        <authorList>
            <person name="Theologis A."/>
            <person name="Ecker J.R."/>
            <person name="Palm C.J."/>
            <person name="Federspiel N.A."/>
            <person name="Kaul S."/>
            <person name="White O."/>
            <person name="Alonso J."/>
            <person name="Altafi H."/>
            <person name="Araujo R."/>
            <person name="Bowman C.L."/>
            <person name="Brooks S.Y."/>
            <person name="Buehler E."/>
            <person name="Chan A."/>
            <person name="Chao Q."/>
            <person name="Chen H."/>
            <person name="Cheuk R.F."/>
            <person name="Chin C.W."/>
            <person name="Chung M.K."/>
            <person name="Conn L."/>
            <person name="Conway A.B."/>
            <person name="Conway A.R."/>
            <person name="Creasy T.H."/>
            <person name="Dewar K."/>
            <person name="Dunn P."/>
            <person name="Etgu P."/>
            <person name="Feldblyum T.V."/>
            <person name="Feng J.-D."/>
            <person name="Fong B."/>
            <person name="Fujii C.Y."/>
            <person name="Gill J.E."/>
            <person name="Goldsmith A.D."/>
            <person name="Haas B."/>
            <person name="Hansen N.F."/>
            <person name="Hughes B."/>
            <person name="Huizar L."/>
            <person name="Hunter J.L."/>
            <person name="Jenkins J."/>
            <person name="Johnson-Hopson C."/>
            <person name="Khan S."/>
            <person name="Khaykin E."/>
            <person name="Kim C.J."/>
            <person name="Koo H.L."/>
            <person name="Kremenetskaia I."/>
            <person name="Kurtz D.B."/>
            <person name="Kwan A."/>
            <person name="Lam B."/>
            <person name="Langin-Hooper S."/>
            <person name="Lee A."/>
            <person name="Lee J.M."/>
            <person name="Lenz C.A."/>
            <person name="Li J.H."/>
            <person name="Li Y.-P."/>
            <person name="Lin X."/>
            <person name="Liu S.X."/>
            <person name="Liu Z.A."/>
            <person name="Luros J.S."/>
            <person name="Maiti R."/>
            <person name="Marziali A."/>
            <person name="Militscher J."/>
            <person name="Miranda M."/>
            <person name="Nguyen M."/>
            <person name="Nierman W.C."/>
            <person name="Osborne B.I."/>
            <person name="Pai G."/>
            <person name="Peterson J."/>
            <person name="Pham P.K."/>
            <person name="Rizzo M."/>
            <person name="Rooney T."/>
            <person name="Rowley D."/>
            <person name="Sakano H."/>
            <person name="Salzberg S.L."/>
            <person name="Schwartz J.R."/>
            <person name="Shinn P."/>
            <person name="Southwick A.M."/>
            <person name="Sun H."/>
            <person name="Tallon L.J."/>
            <person name="Tambunga G."/>
            <person name="Toriumi M.J."/>
            <person name="Town C.D."/>
            <person name="Utterback T."/>
            <person name="Van Aken S."/>
            <person name="Vaysberg M."/>
            <person name="Vysotskaia V.S."/>
            <person name="Walker M."/>
            <person name="Wu D."/>
            <person name="Yu G."/>
            <person name="Fraser C.M."/>
            <person name="Venter J.C."/>
            <person name="Davis R.W."/>
        </authorList>
    </citation>
    <scope>NUCLEOTIDE SEQUENCE [LARGE SCALE GENOMIC DNA]</scope>
    <source>
        <strain>cv. Columbia</strain>
    </source>
</reference>
<reference key="2">
    <citation type="journal article" date="2017" name="Plant J.">
        <title>Araport11: a complete reannotation of the Arabidopsis thaliana reference genome.</title>
        <authorList>
            <person name="Cheng C.Y."/>
            <person name="Krishnakumar V."/>
            <person name="Chan A.P."/>
            <person name="Thibaud-Nissen F."/>
            <person name="Schobel S."/>
            <person name="Town C.D."/>
        </authorList>
    </citation>
    <scope>GENOME REANNOTATION</scope>
    <source>
        <strain>cv. Columbia</strain>
    </source>
</reference>
<reference key="3">
    <citation type="submission" date="2004-10" db="EMBL/GenBank/DDBJ databases">
        <title>Arabidopsis ORF clones.</title>
        <authorList>
            <person name="Cheuk R.F."/>
            <person name="Chen H."/>
            <person name="Kim C.J."/>
            <person name="Shinn P."/>
            <person name="Ecker J.R."/>
        </authorList>
    </citation>
    <scope>NUCLEOTIDE SEQUENCE [LARGE SCALE MRNA] (ISOFORM 1)</scope>
    <source>
        <strain>cv. Columbia</strain>
    </source>
</reference>
<reference key="4">
    <citation type="submission" date="2006-07" db="EMBL/GenBank/DDBJ databases">
        <title>Large-scale analysis of RIKEN Arabidopsis full-length (RAFL) cDNAs.</title>
        <authorList>
            <person name="Totoki Y."/>
            <person name="Seki M."/>
            <person name="Ishida J."/>
            <person name="Nakajima M."/>
            <person name="Enju A."/>
            <person name="Kamiya A."/>
            <person name="Narusaka M."/>
            <person name="Shin-i T."/>
            <person name="Nakagawa M."/>
            <person name="Sakamoto N."/>
            <person name="Oishi K."/>
            <person name="Kohara Y."/>
            <person name="Kobayashi M."/>
            <person name="Toyoda A."/>
            <person name="Sakaki Y."/>
            <person name="Sakurai T."/>
            <person name="Iida K."/>
            <person name="Akiyama K."/>
            <person name="Satou M."/>
            <person name="Toyoda T."/>
            <person name="Konagaya A."/>
            <person name="Carninci P."/>
            <person name="Kawai J."/>
            <person name="Hayashizaki Y."/>
            <person name="Shinozaki K."/>
        </authorList>
    </citation>
    <scope>NUCLEOTIDE SEQUENCE [LARGE SCALE MRNA] (ISOFORM 2)</scope>
    <source>
        <strain>cv. Columbia</strain>
    </source>
</reference>
<reference key="5">
    <citation type="journal article" date="2008" name="J. Proteome Res.">
        <title>Site-specific phosphorylation profiling of Arabidopsis proteins by mass spectrometry and peptide chip analysis.</title>
        <authorList>
            <person name="de la Fuente van Bentem S."/>
            <person name="Anrather D."/>
            <person name="Dohnal I."/>
            <person name="Roitinger E."/>
            <person name="Csaszar E."/>
            <person name="Joore J."/>
            <person name="Buijnink J."/>
            <person name="Carreri A."/>
            <person name="Forzani C."/>
            <person name="Lorkovic Z.J."/>
            <person name="Barta A."/>
            <person name="Lecourieux D."/>
            <person name="Verhounig A."/>
            <person name="Jonak C."/>
            <person name="Hirt H."/>
        </authorList>
    </citation>
    <scope>PHOSPHORYLATION [LARGE SCALE ANALYSIS] AT SER-586</scope>
    <scope>IDENTIFICATION BY MASS SPECTROMETRY [LARGE SCALE ANALYSIS]</scope>
    <source>
        <tissue>Root</tissue>
    </source>
</reference>
<proteinExistence type="evidence at protein level"/>
<protein>
    <recommendedName>
        <fullName>Probable inactive receptor kinase At1g27190</fullName>
    </recommendedName>
</protein>
<accession>O04567</accession>
<accession>Q0WPX0</accession>
<evidence type="ECO:0000250" key="1">
    <source>
        <dbReference type="UniProtKB" id="Q94AG2"/>
    </source>
</evidence>
<evidence type="ECO:0000250" key="2">
    <source>
        <dbReference type="UniProtKB" id="Q9LSI9"/>
    </source>
</evidence>
<evidence type="ECO:0000255" key="3"/>
<evidence type="ECO:0000255" key="4">
    <source>
        <dbReference type="PROSITE-ProRule" id="PRU00159"/>
    </source>
</evidence>
<evidence type="ECO:0000303" key="5">
    <source ref="4"/>
</evidence>
<evidence type="ECO:0000305" key="6"/>
<evidence type="ECO:0007744" key="7">
    <source>
    </source>
</evidence>
<evidence type="ECO:0007829" key="8">
    <source>
        <dbReference type="PDB" id="6FG8"/>
    </source>
</evidence>
<evidence type="ECO:0007829" key="9">
    <source>
        <dbReference type="PDB" id="6G3W"/>
    </source>
</evidence>
<dbReference type="EMBL" id="AC000348">
    <property type="protein sequence ID" value="AAF79872.1"/>
    <property type="molecule type" value="Genomic_DNA"/>
</dbReference>
<dbReference type="EMBL" id="CP002684">
    <property type="protein sequence ID" value="AEE30792.1"/>
    <property type="molecule type" value="Genomic_DNA"/>
</dbReference>
<dbReference type="EMBL" id="BT015801">
    <property type="protein sequence ID" value="AAU94364.1"/>
    <property type="molecule type" value="mRNA"/>
</dbReference>
<dbReference type="EMBL" id="AK228940">
    <property type="protein sequence ID" value="BAF00829.1"/>
    <property type="molecule type" value="mRNA"/>
</dbReference>
<dbReference type="RefSeq" id="NP_174039.1">
    <molecule id="O04567-1"/>
    <property type="nucleotide sequence ID" value="NM_102481.4"/>
</dbReference>
<dbReference type="PDB" id="6FG8">
    <property type="method" value="X-ray"/>
    <property type="resolution" value="1.25 A"/>
    <property type="chains" value="B=1-214"/>
</dbReference>
<dbReference type="PDB" id="6G3W">
    <property type="method" value="X-ray"/>
    <property type="resolution" value="2.20 A"/>
    <property type="chains" value="B/D=25-214"/>
</dbReference>
<dbReference type="PDBsum" id="6FG8"/>
<dbReference type="PDBsum" id="6G3W"/>
<dbReference type="SMR" id="O04567"/>
<dbReference type="BioGRID" id="24843">
    <property type="interactions" value="59"/>
</dbReference>
<dbReference type="FunCoup" id="O04567">
    <property type="interactions" value="1078"/>
</dbReference>
<dbReference type="IntAct" id="O04567">
    <property type="interactions" value="69"/>
</dbReference>
<dbReference type="STRING" id="3702.O04567"/>
<dbReference type="GlyGen" id="O04567">
    <property type="glycosylation" value="1 site"/>
</dbReference>
<dbReference type="iPTMnet" id="O04567"/>
<dbReference type="PaxDb" id="3702-AT1G27190.1"/>
<dbReference type="ProteomicsDB" id="242988">
    <molecule id="O04567-1"/>
</dbReference>
<dbReference type="EnsemblPlants" id="AT1G27190.1">
    <molecule id="O04567-1"/>
    <property type="protein sequence ID" value="AT1G27190.1"/>
    <property type="gene ID" value="AT1G27190"/>
</dbReference>
<dbReference type="GeneID" id="839608"/>
<dbReference type="Gramene" id="AT1G27190.1">
    <molecule id="O04567-1"/>
    <property type="protein sequence ID" value="AT1G27190.1"/>
    <property type="gene ID" value="AT1G27190"/>
</dbReference>
<dbReference type="KEGG" id="ath:AT1G27190"/>
<dbReference type="Araport" id="AT1G27190"/>
<dbReference type="TAIR" id="AT1G27190">
    <property type="gene designation" value="BIR3"/>
</dbReference>
<dbReference type="eggNOG" id="ENOG502QRP1">
    <property type="taxonomic scope" value="Eukaryota"/>
</dbReference>
<dbReference type="HOGENOM" id="CLU_000288_92_6_1"/>
<dbReference type="InParanoid" id="O04567"/>
<dbReference type="OMA" id="AWLHHAC"/>
<dbReference type="OrthoDB" id="598358at2759"/>
<dbReference type="PhylomeDB" id="O04567"/>
<dbReference type="PRO" id="PR:O04567"/>
<dbReference type="Proteomes" id="UP000006548">
    <property type="component" value="Chromosome 1"/>
</dbReference>
<dbReference type="ExpressionAtlas" id="O04567">
    <property type="expression patterns" value="baseline and differential"/>
</dbReference>
<dbReference type="GO" id="GO:0005886">
    <property type="term" value="C:plasma membrane"/>
    <property type="evidence" value="ECO:0007005"/>
    <property type="project" value="TAIR"/>
</dbReference>
<dbReference type="GO" id="GO:0005524">
    <property type="term" value="F:ATP binding"/>
    <property type="evidence" value="ECO:0007669"/>
    <property type="project" value="UniProtKB-KW"/>
</dbReference>
<dbReference type="GO" id="GO:0004672">
    <property type="term" value="F:protein kinase activity"/>
    <property type="evidence" value="ECO:0007669"/>
    <property type="project" value="InterPro"/>
</dbReference>
<dbReference type="CDD" id="cd14066">
    <property type="entry name" value="STKc_IRAK"/>
    <property type="match status" value="1"/>
</dbReference>
<dbReference type="FunFam" id="1.10.510.10:FF:000609">
    <property type="entry name" value="Inactive LRR receptor-like serine/threonine-protein kinase BIR2"/>
    <property type="match status" value="1"/>
</dbReference>
<dbReference type="FunFam" id="3.30.200.20:FF:000428">
    <property type="entry name" value="Inactive LRR receptor-like serine/threonine-protein kinase BIR2"/>
    <property type="match status" value="1"/>
</dbReference>
<dbReference type="FunFam" id="3.80.10.10:FF:000415">
    <property type="entry name" value="Inactive LRR receptor-like serine/threonine-protein kinase BIR2"/>
    <property type="match status" value="1"/>
</dbReference>
<dbReference type="Gene3D" id="3.30.200.20">
    <property type="entry name" value="Phosphorylase Kinase, domain 1"/>
    <property type="match status" value="1"/>
</dbReference>
<dbReference type="Gene3D" id="3.80.10.10">
    <property type="entry name" value="Ribonuclease Inhibitor"/>
    <property type="match status" value="1"/>
</dbReference>
<dbReference type="Gene3D" id="1.10.510.10">
    <property type="entry name" value="Transferase(Phosphotransferase) domain 1"/>
    <property type="match status" value="1"/>
</dbReference>
<dbReference type="InterPro" id="IPR011009">
    <property type="entry name" value="Kinase-like_dom_sf"/>
</dbReference>
<dbReference type="InterPro" id="IPR001611">
    <property type="entry name" value="Leu-rich_rpt"/>
</dbReference>
<dbReference type="InterPro" id="IPR032675">
    <property type="entry name" value="LRR_dom_sf"/>
</dbReference>
<dbReference type="InterPro" id="IPR013210">
    <property type="entry name" value="LRR_N_plant-typ"/>
</dbReference>
<dbReference type="InterPro" id="IPR046959">
    <property type="entry name" value="PRK1-6/SRF4-like"/>
</dbReference>
<dbReference type="InterPro" id="IPR000719">
    <property type="entry name" value="Prot_kinase_dom"/>
</dbReference>
<dbReference type="InterPro" id="IPR001245">
    <property type="entry name" value="Ser-Thr/Tyr_kinase_cat_dom"/>
</dbReference>
<dbReference type="PANTHER" id="PTHR48007:SF86">
    <property type="entry name" value="(WILD MALAYSIAN BANANA) HYPOTHETICAL PROTEIN"/>
    <property type="match status" value="1"/>
</dbReference>
<dbReference type="PANTHER" id="PTHR48007">
    <property type="entry name" value="LEUCINE-RICH REPEAT RECEPTOR-LIKE PROTEIN KINASE PXC1"/>
    <property type="match status" value="1"/>
</dbReference>
<dbReference type="Pfam" id="PF00560">
    <property type="entry name" value="LRR_1"/>
    <property type="match status" value="4"/>
</dbReference>
<dbReference type="Pfam" id="PF08263">
    <property type="entry name" value="LRRNT_2"/>
    <property type="match status" value="1"/>
</dbReference>
<dbReference type="Pfam" id="PF07714">
    <property type="entry name" value="PK_Tyr_Ser-Thr"/>
    <property type="match status" value="1"/>
</dbReference>
<dbReference type="PRINTS" id="PR00019">
    <property type="entry name" value="LEURICHRPT"/>
</dbReference>
<dbReference type="SUPFAM" id="SSF52058">
    <property type="entry name" value="L domain-like"/>
    <property type="match status" value="1"/>
</dbReference>
<dbReference type="SUPFAM" id="SSF56112">
    <property type="entry name" value="Protein kinase-like (PK-like)"/>
    <property type="match status" value="1"/>
</dbReference>
<dbReference type="PROSITE" id="PS50011">
    <property type="entry name" value="PROTEIN_KINASE_DOM"/>
    <property type="match status" value="1"/>
</dbReference>
<name>Y1719_ARATH</name>
<feature type="signal peptide" evidence="3">
    <location>
        <begin position="1"/>
        <end position="24"/>
    </location>
</feature>
<feature type="chain" id="PRO_0000305184" description="Probable inactive receptor kinase At1g27190">
    <location>
        <begin position="25"/>
        <end position="601"/>
    </location>
</feature>
<feature type="transmembrane region" description="Helical" evidence="3">
    <location>
        <begin position="221"/>
        <end position="241"/>
    </location>
</feature>
<feature type="repeat" description="LRR 1">
    <location>
        <begin position="73"/>
        <end position="95"/>
    </location>
</feature>
<feature type="repeat" description="LRR 2">
    <location>
        <begin position="97"/>
        <end position="119"/>
    </location>
</feature>
<feature type="repeat" description="LRR 3">
    <location>
        <begin position="122"/>
        <end position="144"/>
    </location>
</feature>
<feature type="repeat" description="LRR 4">
    <location>
        <begin position="146"/>
        <end position="169"/>
    </location>
</feature>
<feature type="repeat" description="LRR 5">
    <location>
        <begin position="170"/>
        <end position="192"/>
    </location>
</feature>
<feature type="domain" description="Protein kinase" evidence="4">
    <location>
        <begin position="301"/>
        <end position="586"/>
    </location>
</feature>
<feature type="binding site" evidence="4">
    <location>
        <begin position="307"/>
        <end position="315"/>
    </location>
    <ligand>
        <name>ATP</name>
        <dbReference type="ChEBI" id="CHEBI:30616"/>
    </ligand>
</feature>
<feature type="binding site" evidence="4">
    <location>
        <position position="329"/>
    </location>
    <ligand>
        <name>ATP</name>
        <dbReference type="ChEBI" id="CHEBI:30616"/>
    </ligand>
</feature>
<feature type="modified residue" description="Phosphothreonine" evidence="2">
    <location>
        <position position="298"/>
    </location>
</feature>
<feature type="modified residue" description="Phosphoserine" evidence="2">
    <location>
        <position position="383"/>
    </location>
</feature>
<feature type="modified residue" description="Phosphothreonine" evidence="1">
    <location>
        <position position="399"/>
    </location>
</feature>
<feature type="modified residue" description="Phosphotyrosine" evidence="1">
    <location>
        <position position="476"/>
    </location>
</feature>
<feature type="modified residue" description="Phosphoserine" evidence="1">
    <location>
        <position position="478"/>
    </location>
</feature>
<feature type="modified residue" description="Phosphothreonine" evidence="1">
    <location>
        <position position="479"/>
    </location>
</feature>
<feature type="modified residue" description="Phosphoserine" evidence="1">
    <location>
        <position position="483"/>
    </location>
</feature>
<feature type="modified residue" description="Phosphoserine" evidence="7">
    <location>
        <position position="586"/>
    </location>
</feature>
<feature type="glycosylation site" description="N-linked (GlcNAc...) asparagine" evidence="3">
    <location>
        <position position="52"/>
    </location>
</feature>
<feature type="splice variant" id="VSP_028261" description="In isoform 2." evidence="5">
    <location>
        <begin position="1"/>
        <end position="294"/>
    </location>
</feature>
<feature type="helix" evidence="8">
    <location>
        <begin position="27"/>
        <end position="37"/>
    </location>
</feature>
<feature type="turn" evidence="8">
    <location>
        <begin position="44"/>
        <end position="47"/>
    </location>
</feature>
<feature type="helix" evidence="8">
    <location>
        <begin position="53"/>
        <end position="55"/>
    </location>
</feature>
<feature type="strand" evidence="8">
    <location>
        <begin position="64"/>
        <end position="67"/>
    </location>
</feature>
<feature type="strand" evidence="9">
    <location>
        <begin position="69"/>
        <end position="71"/>
    </location>
</feature>
<feature type="strand" evidence="8">
    <location>
        <begin position="74"/>
        <end position="78"/>
    </location>
</feature>
<feature type="helix" evidence="8">
    <location>
        <begin position="90"/>
        <end position="94"/>
    </location>
</feature>
<feature type="strand" evidence="8">
    <location>
        <begin position="100"/>
        <end position="102"/>
    </location>
</feature>
<feature type="strand" evidence="8">
    <location>
        <begin position="106"/>
        <end position="108"/>
    </location>
</feature>
<feature type="helix" evidence="8">
    <location>
        <begin position="116"/>
        <end position="119"/>
    </location>
</feature>
<feature type="strand" evidence="8">
    <location>
        <begin position="124"/>
        <end position="127"/>
    </location>
</feature>
<feature type="helix" evidence="8">
    <location>
        <begin position="139"/>
        <end position="143"/>
    </location>
</feature>
<feature type="strand" evidence="8">
    <location>
        <begin position="148"/>
        <end position="151"/>
    </location>
</feature>
<feature type="strand" evidence="8">
    <location>
        <begin position="158"/>
        <end position="160"/>
    </location>
</feature>
<feature type="helix" evidence="8">
    <location>
        <begin position="163"/>
        <end position="167"/>
    </location>
</feature>
<feature type="strand" evidence="8">
    <location>
        <begin position="173"/>
        <end position="175"/>
    </location>
</feature>
<feature type="strand" evidence="8">
    <location>
        <begin position="179"/>
        <end position="184"/>
    </location>
</feature>
<feature type="helix" evidence="8">
    <location>
        <begin position="187"/>
        <end position="189"/>
    </location>
</feature>
<feature type="helix" evidence="8">
    <location>
        <begin position="194"/>
        <end position="196"/>
    </location>
</feature>
<feature type="strand" evidence="8">
    <location>
        <begin position="199"/>
        <end position="202"/>
    </location>
</feature>
<sequence length="601" mass="65424">MKKIFITLLWLLFISSFLCSSSSAEDDVLCLQGLKNSLIDPSSRLSSWSFPNSSASSICKLTGVSCWNEKENRIISLQLQSMQLAGEIPESLKLCRSLQSLDLSGNDLSGSIPSQICSWLPYLVTLDLSGNKLGGSIPTQIVECKFLNALILSDNKLSGSIPSQLSRLDRLRRLSLAGNDLSGTIPSELARFGGDDFSGNNGLCGKPLSRCGALNGRNLSIIIVAGVLGAVGSLCVGLVIFWWFFIREGSRKKKGYGAGKSKDDSDWIGLLRSHKLVQVTLFQKPIVKIKLGDLMAATNNFSSGNIDVSSRTGVSYKADLPDGSALAVKRLSACGFGEKQFRSEMNKLGELRHPNLVPLLGYCVVEDERLLVYKHMVNGTLFSQLHNGGLCDAVLDWPTRRAIGVGAAKGLAWLHHGCQPPYLHQFISSNVILLDDDFDARITDYGLAKLVGSRDSNDSSFNNGDLGELGYVAPEYSSTMVASLKGDVYGFGIVLLELVTGQKPLSVINGVEGFKGSLVDWVSQYLGTGRSKDAIDRSICDKGHDEEILQFLKIACSCVVSRPKERPTMIQVYESLKNMADKHGVSEHYDEFPLVFNKQEA</sequence>
<keyword id="KW-0002">3D-structure</keyword>
<keyword id="KW-0025">Alternative splicing</keyword>
<keyword id="KW-0067">ATP-binding</keyword>
<keyword id="KW-0325">Glycoprotein</keyword>
<keyword id="KW-0433">Leucine-rich repeat</keyword>
<keyword id="KW-0472">Membrane</keyword>
<keyword id="KW-0547">Nucleotide-binding</keyword>
<keyword id="KW-0597">Phosphoprotein</keyword>
<keyword id="KW-1185">Reference proteome</keyword>
<keyword id="KW-0677">Repeat</keyword>
<keyword id="KW-0732">Signal</keyword>
<keyword id="KW-0812">Transmembrane</keyword>
<keyword id="KW-1133">Transmembrane helix</keyword>
<gene>
    <name type="ordered locus">At1g27190</name>
    <name type="ORF">T7N9.25</name>
</gene>